<geneLocation type="chloroplast"/>
<proteinExistence type="inferred from homology"/>
<sequence length="506" mass="60403">MEEYQVYLELDISRQQHFLYPLIFREYIYGLAYGHDFNGSIFSENVDYDNKSSLLIVKRLITRMYQQNHLIISANDSKKNQFWGYNKNLYSQIISEGFAIVVEIPLSLQLNSSSEEAEIIKYYKNLRSIHSIFPFFEDKLTYLNYVSDARIPYPIHLEILVQVFRYWAKDAPLFHLLRLFLYEYCNWNNLITPKKLISTFSKSNLRVFLFLYNFYVCEYESIFLFLRNKSSHLQLTSFSVLFERIYFYGKIEHFVEVFAKDFSSTLSFFKEPFIHYVRYQGKSILASKNASLLMNKWKNYLIHLWQYHFDVWSQPRTIQINQFSERSFHLLGYFSNVRLNLSAVRSQMLENAFLIEIVMKKLETIVPIIPLIRSLAKAKFCNVLGHPISKPVWADSSDFDIIDRFLRICRNLSHYYNGSSKKKSLYRVKYILRLSCIKTLARKHKSTVRAFLKRLGSEKLLEEFFTEEEEILSLVFQRASSTLQGLYRGRIWYLDIIFINDLINHE</sequence>
<gene>
    <name evidence="1" type="primary">matK</name>
</gene>
<organism>
    <name type="scientific">Cytisus scoparius</name>
    <name type="common">Scotch broom</name>
    <name type="synonym">Spartium scoparium</name>
    <dbReference type="NCBI Taxonomy" id="3835"/>
    <lineage>
        <taxon>Eukaryota</taxon>
        <taxon>Viridiplantae</taxon>
        <taxon>Streptophyta</taxon>
        <taxon>Embryophyta</taxon>
        <taxon>Tracheophyta</taxon>
        <taxon>Spermatophyta</taxon>
        <taxon>Magnoliopsida</taxon>
        <taxon>eudicotyledons</taxon>
        <taxon>Gunneridae</taxon>
        <taxon>Pentapetalae</taxon>
        <taxon>rosids</taxon>
        <taxon>fabids</taxon>
        <taxon>Fabales</taxon>
        <taxon>Fabaceae</taxon>
        <taxon>Papilionoideae</taxon>
        <taxon>50 kb inversion clade</taxon>
        <taxon>genistoids sensu lato</taxon>
        <taxon>core genistoids</taxon>
        <taxon>Genisteae</taxon>
        <taxon>Cytisus</taxon>
    </lineage>
</organism>
<reference key="1">
    <citation type="journal article" date="2004" name="Am. J. Bot.">
        <title>A phylogeny of legumes (Leguminosae) based on analysis of the plastid matK gene resolves many well-supported subclades within the family.</title>
        <authorList>
            <person name="Wojciechowski M.F."/>
            <person name="Lavin M."/>
            <person name="Sanderson M.J."/>
        </authorList>
        <dbReference type="AGRICOLA" id="IND43661289"/>
    </citation>
    <scope>NUCLEOTIDE SEQUENCE [GENOMIC DNA]</scope>
</reference>
<comment type="function">
    <text evidence="1">Usually encoded in the trnK tRNA gene intron. Probably assists in splicing its own and other chloroplast group II introns.</text>
</comment>
<comment type="subcellular location">
    <subcellularLocation>
        <location>Plastid</location>
        <location>Chloroplast</location>
    </subcellularLocation>
</comment>
<comment type="similarity">
    <text evidence="1">Belongs to the intron maturase 2 family. MatK subfamily.</text>
</comment>
<evidence type="ECO:0000255" key="1">
    <source>
        <dbReference type="HAMAP-Rule" id="MF_01390"/>
    </source>
</evidence>
<feature type="chain" id="PRO_0000143354" description="Maturase K">
    <location>
        <begin position="1"/>
        <end position="506"/>
    </location>
</feature>
<protein>
    <recommendedName>
        <fullName evidence="1">Maturase K</fullName>
    </recommendedName>
    <alternativeName>
        <fullName evidence="1">Intron maturase</fullName>
    </alternativeName>
</protein>
<name>MATK_CYTSC</name>
<dbReference type="EMBL" id="AY386902">
    <property type="protein sequence ID" value="AAQ91980.1"/>
    <property type="molecule type" value="Genomic_DNA"/>
</dbReference>
<dbReference type="GO" id="GO:0009507">
    <property type="term" value="C:chloroplast"/>
    <property type="evidence" value="ECO:0007669"/>
    <property type="project" value="UniProtKB-SubCell"/>
</dbReference>
<dbReference type="GO" id="GO:0003723">
    <property type="term" value="F:RNA binding"/>
    <property type="evidence" value="ECO:0007669"/>
    <property type="project" value="UniProtKB-KW"/>
</dbReference>
<dbReference type="GO" id="GO:0006397">
    <property type="term" value="P:mRNA processing"/>
    <property type="evidence" value="ECO:0007669"/>
    <property type="project" value="UniProtKB-KW"/>
</dbReference>
<dbReference type="GO" id="GO:0008380">
    <property type="term" value="P:RNA splicing"/>
    <property type="evidence" value="ECO:0007669"/>
    <property type="project" value="UniProtKB-UniRule"/>
</dbReference>
<dbReference type="GO" id="GO:0008033">
    <property type="term" value="P:tRNA processing"/>
    <property type="evidence" value="ECO:0007669"/>
    <property type="project" value="UniProtKB-KW"/>
</dbReference>
<dbReference type="HAMAP" id="MF_01390">
    <property type="entry name" value="MatK"/>
    <property type="match status" value="1"/>
</dbReference>
<dbReference type="InterPro" id="IPR024937">
    <property type="entry name" value="Domain_X"/>
</dbReference>
<dbReference type="InterPro" id="IPR002866">
    <property type="entry name" value="Maturase_MatK"/>
</dbReference>
<dbReference type="InterPro" id="IPR024942">
    <property type="entry name" value="Maturase_MatK_N"/>
</dbReference>
<dbReference type="PANTHER" id="PTHR34811">
    <property type="entry name" value="MATURASE K"/>
    <property type="match status" value="1"/>
</dbReference>
<dbReference type="PANTHER" id="PTHR34811:SF1">
    <property type="entry name" value="MATURASE K"/>
    <property type="match status" value="1"/>
</dbReference>
<dbReference type="Pfam" id="PF01348">
    <property type="entry name" value="Intron_maturas2"/>
    <property type="match status" value="1"/>
</dbReference>
<dbReference type="Pfam" id="PF01824">
    <property type="entry name" value="MatK_N"/>
    <property type="match status" value="1"/>
</dbReference>
<keyword id="KW-0150">Chloroplast</keyword>
<keyword id="KW-0507">mRNA processing</keyword>
<keyword id="KW-0934">Plastid</keyword>
<keyword id="KW-0694">RNA-binding</keyword>
<keyword id="KW-0819">tRNA processing</keyword>
<accession>Q5YK00</accession>